<reference evidence="3" key="1">
    <citation type="journal article" date="2022" name="Food Chem.">
        <title>Identification of vicilin, legumin and antimicrobial peptide 2a as macadamia nut allergens.</title>
        <authorList>
            <person name="Kabasser S."/>
            <person name="Pratap K."/>
            <person name="Kamath S."/>
            <person name="Taki A.C."/>
            <person name="Dang T."/>
            <person name="Koplin J."/>
            <person name="Perrett K."/>
            <person name="Hummel K."/>
            <person name="Radauer C."/>
            <person name="Breiteneder H."/>
            <person name="Lopata A.L."/>
            <person name="Bublin M."/>
        </authorList>
    </citation>
    <scope>PROTEIN SEQUENCE</scope>
    <scope>IDENTIFICATION BY MASS SPECTROMETRY</scope>
    <scope>FUNCTION</scope>
    <scope>ALLERGEN</scope>
    <source>
        <tissue evidence="2">Seed</tissue>
    </source>
</reference>
<keyword id="KW-0020">Allergen</keyword>
<keyword id="KW-0903">Direct protein sequencing</keyword>
<keyword id="KW-0389">IgE-binding protein</keyword>
<keyword id="KW-0708">Seed storage protein</keyword>
<keyword id="KW-0758">Storage protein</keyword>
<dbReference type="GO" id="GO:0019863">
    <property type="term" value="F:IgE binding"/>
    <property type="evidence" value="ECO:0000314"/>
    <property type="project" value="UniProtKB"/>
</dbReference>
<dbReference type="GO" id="GO:0045735">
    <property type="term" value="F:nutrient reservoir activity"/>
    <property type="evidence" value="ECO:0007669"/>
    <property type="project" value="UniProtKB-KW"/>
</dbReference>
<dbReference type="InterPro" id="IPR011051">
    <property type="entry name" value="RmlC_Cupin_sf"/>
</dbReference>
<dbReference type="SUPFAM" id="SSF51182">
    <property type="entry name" value="RmlC-like cupins"/>
    <property type="match status" value="1"/>
</dbReference>
<name>11S1_MACIN</name>
<sequence>LSTLNTHNLPLLRLVYLEREDLVAVHVDDLNNQANQLDQKLDGGLLPQGHAPHWLMNAHSLFYLTRLLVAQCRAPKGMLVVLPAGVAHWCLNDGKHYLDNPR</sequence>
<organism evidence="2">
    <name type="scientific">Macadamia integrifolia</name>
    <name type="common">Macadamia nut</name>
    <dbReference type="NCBI Taxonomy" id="60698"/>
    <lineage>
        <taxon>Eukaryota</taxon>
        <taxon>Viridiplantae</taxon>
        <taxon>Streptophyta</taxon>
        <taxon>Embryophyta</taxon>
        <taxon>Tracheophyta</taxon>
        <taxon>Spermatophyta</taxon>
        <taxon>Magnoliopsida</taxon>
        <taxon>Proteales</taxon>
        <taxon>Proteaceae</taxon>
        <taxon>Macadamia</taxon>
    </lineage>
</organism>
<feature type="chain" id="PRO_0000452985" description="Legumin-like protein Mac i 2">
    <location>
        <begin position="1"/>
        <end position="102"/>
    </location>
</feature>
<feature type="non-consecutive residues" evidence="2">
    <location>
        <begin position="13"/>
        <end position="14"/>
    </location>
</feature>
<feature type="non-consecutive residues" evidence="2">
    <location>
        <begin position="19"/>
        <end position="20"/>
    </location>
</feature>
<feature type="non-consecutive residues" evidence="2">
    <location>
        <begin position="40"/>
        <end position="41"/>
    </location>
</feature>
<feature type="non-consecutive residues" evidence="2">
    <location>
        <begin position="66"/>
        <end position="67"/>
    </location>
</feature>
<feature type="non-consecutive residues" evidence="2">
    <location>
        <begin position="73"/>
        <end position="74"/>
    </location>
</feature>
<feature type="non-consecutive residues" evidence="2">
    <location>
        <begin position="95"/>
        <end position="96"/>
    </location>
</feature>
<feature type="non-terminal residue" evidence="2">
    <location>
        <position position="1"/>
    </location>
</feature>
<feature type="non-terminal residue" evidence="2">
    <location>
        <position position="102"/>
    </location>
</feature>
<protein>
    <recommendedName>
        <fullName evidence="2">Legumin-like protein Mac i 2</fullName>
    </recommendedName>
    <alternativeName>
        <fullName evidence="2">11S globulin seed storage protein Mac i 2</fullName>
    </alternativeName>
    <allergenName evidence="2">Mac i 2</allergenName>
</protein>
<comment type="function">
    <text evidence="1">Seed storage protein.</text>
</comment>
<comment type="allergen">
    <text evidence="1">Causes an allergic reaction in human (PubMed:34525424). Binds to IgE in all 5 patients allergic to macadamia nut (PubMed:34525424). Binds to IgE in 50% of 8 macadamia nut-sensitized but clinically tolerant patients, however only weak IgE binding is observed in 3 of these patients (PubMed:34525424). Also weakly binds to IgE in 7% of the 14 patients tested, that are allergic to peanut and/or tree nut but tolerant and not-sensitized to macadamia nut (PubMed:34525424).</text>
</comment>
<comment type="similarity">
    <text evidence="3">Belongs to the 11S seed storage protein (globulins) family.</text>
</comment>
<accession>C0HLR7</accession>
<proteinExistence type="evidence at protein level"/>
<evidence type="ECO:0000269" key="1">
    <source>
    </source>
</evidence>
<evidence type="ECO:0000303" key="2">
    <source>
    </source>
</evidence>
<evidence type="ECO:0000305" key="3"/>